<evidence type="ECO:0000255" key="1">
    <source>
        <dbReference type="HAMAP-Rule" id="MF_00107"/>
    </source>
</evidence>
<gene>
    <name evidence="1" type="primary">ispF</name>
    <name type="ordered locus">H16_A1457</name>
</gene>
<comment type="function">
    <text evidence="1">Involved in the biosynthesis of isopentenyl diphosphate (IPP) and dimethylallyl diphosphate (DMAPP), two major building blocks of isoprenoid compounds. Catalyzes the conversion of 4-diphosphocytidyl-2-C-methyl-D-erythritol 2-phosphate (CDP-ME2P) to 2-C-methyl-D-erythritol 2,4-cyclodiphosphate (ME-CPP) with a corresponding release of cytidine 5-monophosphate (CMP).</text>
</comment>
<comment type="catalytic activity">
    <reaction evidence="1">
        <text>4-CDP-2-C-methyl-D-erythritol 2-phosphate = 2-C-methyl-D-erythritol 2,4-cyclic diphosphate + CMP</text>
        <dbReference type="Rhea" id="RHEA:23864"/>
        <dbReference type="ChEBI" id="CHEBI:57919"/>
        <dbReference type="ChEBI" id="CHEBI:58483"/>
        <dbReference type="ChEBI" id="CHEBI:60377"/>
        <dbReference type="EC" id="4.6.1.12"/>
    </reaction>
</comment>
<comment type="cofactor">
    <cofactor evidence="1">
        <name>a divalent metal cation</name>
        <dbReference type="ChEBI" id="CHEBI:60240"/>
    </cofactor>
    <text evidence="1">Binds 1 divalent metal cation per subunit.</text>
</comment>
<comment type="pathway">
    <text evidence="1">Isoprenoid biosynthesis; isopentenyl diphosphate biosynthesis via DXP pathway; isopentenyl diphosphate from 1-deoxy-D-xylulose 5-phosphate: step 4/6.</text>
</comment>
<comment type="subunit">
    <text evidence="1">Homotrimer.</text>
</comment>
<comment type="similarity">
    <text evidence="1">Belongs to the IspF family.</text>
</comment>
<proteinExistence type="inferred from homology"/>
<dbReference type="EC" id="4.6.1.12" evidence="1"/>
<dbReference type="EMBL" id="AM260479">
    <property type="protein sequence ID" value="CAJ92592.1"/>
    <property type="molecule type" value="Genomic_DNA"/>
</dbReference>
<dbReference type="RefSeq" id="WP_010810113.1">
    <property type="nucleotide sequence ID" value="NZ_CP039287.1"/>
</dbReference>
<dbReference type="SMR" id="Q0KBM9"/>
<dbReference type="STRING" id="381666.H16_A1457"/>
<dbReference type="KEGG" id="reh:H16_A1457"/>
<dbReference type="eggNOG" id="COG0245">
    <property type="taxonomic scope" value="Bacteria"/>
</dbReference>
<dbReference type="HOGENOM" id="CLU_084630_2_0_4"/>
<dbReference type="OrthoDB" id="9804336at2"/>
<dbReference type="UniPathway" id="UPA00056">
    <property type="reaction ID" value="UER00095"/>
</dbReference>
<dbReference type="Proteomes" id="UP000008210">
    <property type="component" value="Chromosome 1"/>
</dbReference>
<dbReference type="GO" id="GO:0008685">
    <property type="term" value="F:2-C-methyl-D-erythritol 2,4-cyclodiphosphate synthase activity"/>
    <property type="evidence" value="ECO:0007669"/>
    <property type="project" value="UniProtKB-UniRule"/>
</dbReference>
<dbReference type="GO" id="GO:0046872">
    <property type="term" value="F:metal ion binding"/>
    <property type="evidence" value="ECO:0007669"/>
    <property type="project" value="UniProtKB-KW"/>
</dbReference>
<dbReference type="GO" id="GO:0019288">
    <property type="term" value="P:isopentenyl diphosphate biosynthetic process, methylerythritol 4-phosphate pathway"/>
    <property type="evidence" value="ECO:0007669"/>
    <property type="project" value="UniProtKB-UniRule"/>
</dbReference>
<dbReference type="GO" id="GO:0016114">
    <property type="term" value="P:terpenoid biosynthetic process"/>
    <property type="evidence" value="ECO:0007669"/>
    <property type="project" value="InterPro"/>
</dbReference>
<dbReference type="CDD" id="cd00554">
    <property type="entry name" value="MECDP_synthase"/>
    <property type="match status" value="1"/>
</dbReference>
<dbReference type="FunFam" id="3.30.1330.50:FF:000001">
    <property type="entry name" value="2-C-methyl-D-erythritol 2,4-cyclodiphosphate synthase"/>
    <property type="match status" value="1"/>
</dbReference>
<dbReference type="Gene3D" id="3.30.1330.50">
    <property type="entry name" value="2-C-methyl-D-erythritol 2,4-cyclodiphosphate synthase"/>
    <property type="match status" value="1"/>
</dbReference>
<dbReference type="HAMAP" id="MF_00107">
    <property type="entry name" value="IspF"/>
    <property type="match status" value="1"/>
</dbReference>
<dbReference type="InterPro" id="IPR003526">
    <property type="entry name" value="MECDP_synthase"/>
</dbReference>
<dbReference type="InterPro" id="IPR020555">
    <property type="entry name" value="MECDP_synthase_CS"/>
</dbReference>
<dbReference type="InterPro" id="IPR036571">
    <property type="entry name" value="MECDP_synthase_sf"/>
</dbReference>
<dbReference type="NCBIfam" id="TIGR00151">
    <property type="entry name" value="ispF"/>
    <property type="match status" value="1"/>
</dbReference>
<dbReference type="PANTHER" id="PTHR43181">
    <property type="entry name" value="2-C-METHYL-D-ERYTHRITOL 2,4-CYCLODIPHOSPHATE SYNTHASE, CHLOROPLASTIC"/>
    <property type="match status" value="1"/>
</dbReference>
<dbReference type="PANTHER" id="PTHR43181:SF1">
    <property type="entry name" value="2-C-METHYL-D-ERYTHRITOL 2,4-CYCLODIPHOSPHATE SYNTHASE, CHLOROPLASTIC"/>
    <property type="match status" value="1"/>
</dbReference>
<dbReference type="Pfam" id="PF02542">
    <property type="entry name" value="YgbB"/>
    <property type="match status" value="1"/>
</dbReference>
<dbReference type="SUPFAM" id="SSF69765">
    <property type="entry name" value="IpsF-like"/>
    <property type="match status" value="1"/>
</dbReference>
<dbReference type="PROSITE" id="PS01350">
    <property type="entry name" value="ISPF"/>
    <property type="match status" value="1"/>
</dbReference>
<accession>Q0KBM9</accession>
<keyword id="KW-0414">Isoprene biosynthesis</keyword>
<keyword id="KW-0456">Lyase</keyword>
<keyword id="KW-0479">Metal-binding</keyword>
<keyword id="KW-1185">Reference proteome</keyword>
<name>ISPF_CUPNH</name>
<reference key="1">
    <citation type="journal article" date="2006" name="Nat. Biotechnol.">
        <title>Genome sequence of the bioplastic-producing 'Knallgas' bacterium Ralstonia eutropha H16.</title>
        <authorList>
            <person name="Pohlmann A."/>
            <person name="Fricke W.F."/>
            <person name="Reinecke F."/>
            <person name="Kusian B."/>
            <person name="Liesegang H."/>
            <person name="Cramm R."/>
            <person name="Eitinger T."/>
            <person name="Ewering C."/>
            <person name="Poetter M."/>
            <person name="Schwartz E."/>
            <person name="Strittmatter A."/>
            <person name="Voss I."/>
            <person name="Gottschalk G."/>
            <person name="Steinbuechel A."/>
            <person name="Friedrich B."/>
            <person name="Bowien B."/>
        </authorList>
    </citation>
    <scope>NUCLEOTIDE SEQUENCE [LARGE SCALE GENOMIC DNA]</scope>
    <source>
        <strain>ATCC 17699 / DSM 428 / KCTC 22496 / NCIMB 10442 / H16 / Stanier 337</strain>
    </source>
</reference>
<protein>
    <recommendedName>
        <fullName evidence="1">2-C-methyl-D-erythritol 2,4-cyclodiphosphate synthase</fullName>
        <shortName evidence="1">MECDP-synthase</shortName>
        <shortName evidence="1">MECPP-synthase</shortName>
        <shortName evidence="1">MECPS</shortName>
        <ecNumber evidence="1">4.6.1.12</ecNumber>
    </recommendedName>
</protein>
<organism>
    <name type="scientific">Cupriavidus necator (strain ATCC 17699 / DSM 428 / KCTC 22496 / NCIMB 10442 / H16 / Stanier 337)</name>
    <name type="common">Ralstonia eutropha</name>
    <dbReference type="NCBI Taxonomy" id="381666"/>
    <lineage>
        <taxon>Bacteria</taxon>
        <taxon>Pseudomonadati</taxon>
        <taxon>Pseudomonadota</taxon>
        <taxon>Betaproteobacteria</taxon>
        <taxon>Burkholderiales</taxon>
        <taxon>Burkholderiaceae</taxon>
        <taxon>Cupriavidus</taxon>
    </lineage>
</organism>
<sequence>MMPFDIRVGQGYDVHALVPGRKLILGGVEIPHDRGLLGHSDADALLHAVTDALFGAAALGDIGRHFPDTDAQFAGADSRVLLREAARRVREAGYEIGNVDATVIAQAPKLAPHIGAMVANLAEDLGIARGRCNVKAKTNEKLGFEGRQEGIVAQAAVLLWRASVGDAQD</sequence>
<feature type="chain" id="PRO_1000022867" description="2-C-methyl-D-erythritol 2,4-cyclodiphosphate synthase">
    <location>
        <begin position="1"/>
        <end position="169"/>
    </location>
</feature>
<feature type="binding site" evidence="1">
    <location>
        <begin position="13"/>
        <end position="15"/>
    </location>
    <ligand>
        <name>4-CDP-2-C-methyl-D-erythritol 2-phosphate</name>
        <dbReference type="ChEBI" id="CHEBI:57919"/>
    </ligand>
</feature>
<feature type="binding site" evidence="1">
    <location>
        <position position="13"/>
    </location>
    <ligand>
        <name>a divalent metal cation</name>
        <dbReference type="ChEBI" id="CHEBI:60240"/>
    </ligand>
</feature>
<feature type="binding site" evidence="1">
    <location>
        <position position="15"/>
    </location>
    <ligand>
        <name>a divalent metal cation</name>
        <dbReference type="ChEBI" id="CHEBI:60240"/>
    </ligand>
</feature>
<feature type="binding site" evidence="1">
    <location>
        <begin position="39"/>
        <end position="40"/>
    </location>
    <ligand>
        <name>4-CDP-2-C-methyl-D-erythritol 2-phosphate</name>
        <dbReference type="ChEBI" id="CHEBI:57919"/>
    </ligand>
</feature>
<feature type="binding site" evidence="1">
    <location>
        <position position="47"/>
    </location>
    <ligand>
        <name>a divalent metal cation</name>
        <dbReference type="ChEBI" id="CHEBI:60240"/>
    </ligand>
</feature>
<feature type="binding site" evidence="1">
    <location>
        <begin position="61"/>
        <end position="63"/>
    </location>
    <ligand>
        <name>4-CDP-2-C-methyl-D-erythritol 2-phosphate</name>
        <dbReference type="ChEBI" id="CHEBI:57919"/>
    </ligand>
</feature>
<feature type="binding site" evidence="1">
    <location>
        <begin position="66"/>
        <end position="70"/>
    </location>
    <ligand>
        <name>4-CDP-2-C-methyl-D-erythritol 2-phosphate</name>
        <dbReference type="ChEBI" id="CHEBI:57919"/>
    </ligand>
</feature>
<feature type="binding site" evidence="1">
    <location>
        <position position="144"/>
    </location>
    <ligand>
        <name>4-CDP-2-C-methyl-D-erythritol 2-phosphate</name>
        <dbReference type="ChEBI" id="CHEBI:57919"/>
    </ligand>
</feature>
<feature type="binding site" evidence="1">
    <location>
        <position position="147"/>
    </location>
    <ligand>
        <name>4-CDP-2-C-methyl-D-erythritol 2-phosphate</name>
        <dbReference type="ChEBI" id="CHEBI:57919"/>
    </ligand>
</feature>
<feature type="site" description="Transition state stabilizer" evidence="1">
    <location>
        <position position="39"/>
    </location>
</feature>
<feature type="site" description="Transition state stabilizer" evidence="1">
    <location>
        <position position="138"/>
    </location>
</feature>